<keyword id="KW-0025">Alternative splicing</keyword>
<keyword id="KW-0175">Coiled coil</keyword>
<keyword id="KW-0217">Developmental protein</keyword>
<keyword id="KW-0221">Differentiation</keyword>
<keyword id="KW-0507">mRNA processing</keyword>
<keyword id="KW-0508">mRNA splicing</keyword>
<keyword id="KW-0539">Nucleus</keyword>
<keyword id="KW-1185">Reference proteome</keyword>
<keyword id="KW-0726">Sexual differentiation</keyword>
<name>FL2D_DROME</name>
<reference key="1">
    <citation type="journal article" date="2000" name="Genetics">
        <title>The Drosophila fl(2)d gene, required for female-specific splicing of Sxl and tra pre-mRNAs, encodes a novel nuclear protein with a HQ-rich domain.</title>
        <authorList>
            <person name="Penalva L.O.F."/>
            <person name="Ruiz M.F."/>
            <person name="Ortega A."/>
            <person name="Granadino B."/>
            <person name="Vicente L."/>
            <person name="Segarra C."/>
            <person name="Valcarcel J."/>
            <person name="Sanchez L."/>
        </authorList>
    </citation>
    <scope>NUCLEOTIDE SEQUENCE [MRNA] (ISOFORMS A AND B)</scope>
    <scope>SUBCELLULAR LOCATION</scope>
</reference>
<reference key="2">
    <citation type="journal article" date="2000" name="Science">
        <title>The genome sequence of Drosophila melanogaster.</title>
        <authorList>
            <person name="Adams M.D."/>
            <person name="Celniker S.E."/>
            <person name="Holt R.A."/>
            <person name="Evans C.A."/>
            <person name="Gocayne J.D."/>
            <person name="Amanatides P.G."/>
            <person name="Scherer S.E."/>
            <person name="Li P.W."/>
            <person name="Hoskins R.A."/>
            <person name="Galle R.F."/>
            <person name="George R.A."/>
            <person name="Lewis S.E."/>
            <person name="Richards S."/>
            <person name="Ashburner M."/>
            <person name="Henderson S.N."/>
            <person name="Sutton G.G."/>
            <person name="Wortman J.R."/>
            <person name="Yandell M.D."/>
            <person name="Zhang Q."/>
            <person name="Chen L.X."/>
            <person name="Brandon R.C."/>
            <person name="Rogers Y.-H.C."/>
            <person name="Blazej R.G."/>
            <person name="Champe M."/>
            <person name="Pfeiffer B.D."/>
            <person name="Wan K.H."/>
            <person name="Doyle C."/>
            <person name="Baxter E.G."/>
            <person name="Helt G."/>
            <person name="Nelson C.R."/>
            <person name="Miklos G.L.G."/>
            <person name="Abril J.F."/>
            <person name="Agbayani A."/>
            <person name="An H.-J."/>
            <person name="Andrews-Pfannkoch C."/>
            <person name="Baldwin D."/>
            <person name="Ballew R.M."/>
            <person name="Basu A."/>
            <person name="Baxendale J."/>
            <person name="Bayraktaroglu L."/>
            <person name="Beasley E.M."/>
            <person name="Beeson K.Y."/>
            <person name="Benos P.V."/>
            <person name="Berman B.P."/>
            <person name="Bhandari D."/>
            <person name="Bolshakov S."/>
            <person name="Borkova D."/>
            <person name="Botchan M.R."/>
            <person name="Bouck J."/>
            <person name="Brokstein P."/>
            <person name="Brottier P."/>
            <person name="Burtis K.C."/>
            <person name="Busam D.A."/>
            <person name="Butler H."/>
            <person name="Cadieu E."/>
            <person name="Center A."/>
            <person name="Chandra I."/>
            <person name="Cherry J.M."/>
            <person name="Cawley S."/>
            <person name="Dahlke C."/>
            <person name="Davenport L.B."/>
            <person name="Davies P."/>
            <person name="de Pablos B."/>
            <person name="Delcher A."/>
            <person name="Deng Z."/>
            <person name="Mays A.D."/>
            <person name="Dew I."/>
            <person name="Dietz S.M."/>
            <person name="Dodson K."/>
            <person name="Doup L.E."/>
            <person name="Downes M."/>
            <person name="Dugan-Rocha S."/>
            <person name="Dunkov B.C."/>
            <person name="Dunn P."/>
            <person name="Durbin K.J."/>
            <person name="Evangelista C.C."/>
            <person name="Ferraz C."/>
            <person name="Ferriera S."/>
            <person name="Fleischmann W."/>
            <person name="Fosler C."/>
            <person name="Gabrielian A.E."/>
            <person name="Garg N.S."/>
            <person name="Gelbart W.M."/>
            <person name="Glasser K."/>
            <person name="Glodek A."/>
            <person name="Gong F."/>
            <person name="Gorrell J.H."/>
            <person name="Gu Z."/>
            <person name="Guan P."/>
            <person name="Harris M."/>
            <person name="Harris N.L."/>
            <person name="Harvey D.A."/>
            <person name="Heiman T.J."/>
            <person name="Hernandez J.R."/>
            <person name="Houck J."/>
            <person name="Hostin D."/>
            <person name="Houston K.A."/>
            <person name="Howland T.J."/>
            <person name="Wei M.-H."/>
            <person name="Ibegwam C."/>
            <person name="Jalali M."/>
            <person name="Kalush F."/>
            <person name="Karpen G.H."/>
            <person name="Ke Z."/>
            <person name="Kennison J.A."/>
            <person name="Ketchum K.A."/>
            <person name="Kimmel B.E."/>
            <person name="Kodira C.D."/>
            <person name="Kraft C.L."/>
            <person name="Kravitz S."/>
            <person name="Kulp D."/>
            <person name="Lai Z."/>
            <person name="Lasko P."/>
            <person name="Lei Y."/>
            <person name="Levitsky A.A."/>
            <person name="Li J.H."/>
            <person name="Li Z."/>
            <person name="Liang Y."/>
            <person name="Lin X."/>
            <person name="Liu X."/>
            <person name="Mattei B."/>
            <person name="McIntosh T.C."/>
            <person name="McLeod M.P."/>
            <person name="McPherson D."/>
            <person name="Merkulov G."/>
            <person name="Milshina N.V."/>
            <person name="Mobarry C."/>
            <person name="Morris J."/>
            <person name="Moshrefi A."/>
            <person name="Mount S.M."/>
            <person name="Moy M."/>
            <person name="Murphy B."/>
            <person name="Murphy L."/>
            <person name="Muzny D.M."/>
            <person name="Nelson D.L."/>
            <person name="Nelson D.R."/>
            <person name="Nelson K.A."/>
            <person name="Nixon K."/>
            <person name="Nusskern D.R."/>
            <person name="Pacleb J.M."/>
            <person name="Palazzolo M."/>
            <person name="Pittman G.S."/>
            <person name="Pan S."/>
            <person name="Pollard J."/>
            <person name="Puri V."/>
            <person name="Reese M.G."/>
            <person name="Reinert K."/>
            <person name="Remington K."/>
            <person name="Saunders R.D.C."/>
            <person name="Scheeler F."/>
            <person name="Shen H."/>
            <person name="Shue B.C."/>
            <person name="Siden-Kiamos I."/>
            <person name="Simpson M."/>
            <person name="Skupski M.P."/>
            <person name="Smith T.J."/>
            <person name="Spier E."/>
            <person name="Spradling A.C."/>
            <person name="Stapleton M."/>
            <person name="Strong R."/>
            <person name="Sun E."/>
            <person name="Svirskas R."/>
            <person name="Tector C."/>
            <person name="Turner R."/>
            <person name="Venter E."/>
            <person name="Wang A.H."/>
            <person name="Wang X."/>
            <person name="Wang Z.-Y."/>
            <person name="Wassarman D.A."/>
            <person name="Weinstock G.M."/>
            <person name="Weissenbach J."/>
            <person name="Williams S.M."/>
            <person name="Woodage T."/>
            <person name="Worley K.C."/>
            <person name="Wu D."/>
            <person name="Yang S."/>
            <person name="Yao Q.A."/>
            <person name="Ye J."/>
            <person name="Yeh R.-F."/>
            <person name="Zaveri J.S."/>
            <person name="Zhan M."/>
            <person name="Zhang G."/>
            <person name="Zhao Q."/>
            <person name="Zheng L."/>
            <person name="Zheng X.H."/>
            <person name="Zhong F.N."/>
            <person name="Zhong W."/>
            <person name="Zhou X."/>
            <person name="Zhu S.C."/>
            <person name="Zhu X."/>
            <person name="Smith H.O."/>
            <person name="Gibbs R.A."/>
            <person name="Myers E.W."/>
            <person name="Rubin G.M."/>
            <person name="Venter J.C."/>
        </authorList>
    </citation>
    <scope>NUCLEOTIDE SEQUENCE [LARGE SCALE GENOMIC DNA]</scope>
    <source>
        <strain>Berkeley</strain>
    </source>
</reference>
<reference key="3">
    <citation type="journal article" date="2002" name="Genome Biol.">
        <title>Annotation of the Drosophila melanogaster euchromatic genome: a systematic review.</title>
        <authorList>
            <person name="Misra S."/>
            <person name="Crosby M.A."/>
            <person name="Mungall C.J."/>
            <person name="Matthews B.B."/>
            <person name="Campbell K.S."/>
            <person name="Hradecky P."/>
            <person name="Huang Y."/>
            <person name="Kaminker J.S."/>
            <person name="Millburn G.H."/>
            <person name="Prochnik S.E."/>
            <person name="Smith C.D."/>
            <person name="Tupy J.L."/>
            <person name="Whitfield E.J."/>
            <person name="Bayraktaroglu L."/>
            <person name="Berman B.P."/>
            <person name="Bettencourt B.R."/>
            <person name="Celniker S.E."/>
            <person name="de Grey A.D.N.J."/>
            <person name="Drysdale R.A."/>
            <person name="Harris N.L."/>
            <person name="Richter J."/>
            <person name="Russo S."/>
            <person name="Schroeder A.J."/>
            <person name="Shu S.Q."/>
            <person name="Stapleton M."/>
            <person name="Yamada C."/>
            <person name="Ashburner M."/>
            <person name="Gelbart W.M."/>
            <person name="Rubin G.M."/>
            <person name="Lewis S.E."/>
        </authorList>
    </citation>
    <scope>GENOME REANNOTATION</scope>
    <scope>ALTERNATIVE SPLICING (ISOFORMS A AND B)</scope>
    <source>
        <strain>Berkeley</strain>
    </source>
</reference>
<reference key="4">
    <citation type="journal article" date="2002" name="Genome Biol.">
        <title>A Drosophila full-length cDNA resource.</title>
        <authorList>
            <person name="Stapleton M."/>
            <person name="Carlson J.W."/>
            <person name="Brokstein P."/>
            <person name="Yu C."/>
            <person name="Champe M."/>
            <person name="George R.A."/>
            <person name="Guarin H."/>
            <person name="Kronmiller B."/>
            <person name="Pacleb J.M."/>
            <person name="Park S."/>
            <person name="Wan K.H."/>
            <person name="Rubin G.M."/>
            <person name="Celniker S.E."/>
        </authorList>
    </citation>
    <scope>NUCLEOTIDE SEQUENCE [LARGE SCALE MRNA] (ISOFORM A)</scope>
    <source>
        <strain>Berkeley</strain>
        <tissue>Embryo</tissue>
    </source>
</reference>
<reference key="5">
    <citation type="journal article" date="1990" name="EMBO J.">
        <title>The Drosophila melanogaster fl(2)d gene is needed for the female-specific splicing of Sex-lethal RNA.</title>
        <authorList>
            <person name="Granadino B."/>
            <person name="Campuzano S."/>
            <person name="Sanchez L."/>
        </authorList>
    </citation>
    <scope>FUNCTION</scope>
</reference>
<reference key="6">
    <citation type="journal article" date="1999" name="Genetics">
        <title>Trans-acting factors required for inclusion of regulated exons in the Ultrabithorax mRNAs of Drosophila melanogaster.</title>
        <authorList>
            <person name="Burnette J.M."/>
            <person name="Hatton A.R."/>
            <person name="Lopez A.J."/>
        </authorList>
    </citation>
    <scope>FUNCTION</scope>
</reference>
<reference key="7">
    <citation type="journal article" date="2003" name="J. Biol. Chem.">
        <title>Biochemical function of female-lethal (2)D/Wilms' tumor suppressor-1-associated proteins in alternative pre-mRNA splicing.</title>
        <authorList>
            <person name="Ortega A."/>
            <person name="Niksic M."/>
            <person name="Bachi A."/>
            <person name="Wilm M."/>
            <person name="Sanchez L."/>
            <person name="Hastie N."/>
            <person name="Valcarcel J."/>
        </authorList>
    </citation>
    <scope>INTERACTION WITH VIR AND MSK</scope>
    <scope>IDENTIFICATION IN COMPLEX WITH SXL AND VIR</scope>
</reference>
<reference key="8">
    <citation type="journal article" date="2016" name="Nature">
        <title>m(6)A modulates neuronal functions and sex determination in Drosophila.</title>
        <authorList>
            <person name="Lence T."/>
            <person name="Akhtar J."/>
            <person name="Bayer M."/>
            <person name="Schmid K."/>
            <person name="Spindler L."/>
            <person name="Ho C.H."/>
            <person name="Kreim N."/>
            <person name="Andrade-Navarro M.A."/>
            <person name="Poeck B."/>
            <person name="Helm M."/>
            <person name="Roignant J.Y."/>
        </authorList>
    </citation>
    <scope>SUBCELLULAR LOCATION</scope>
    <scope>DEVELOPMENTAL STAGE</scope>
    <scope>IDENTIFICATION IN THE WMM COMPLEX</scope>
</reference>
<reference key="9">
    <citation type="journal article" date="2017" name="Nat. Commun.">
        <title>The m6A pathway facilitates sex determination in Drosophila.</title>
        <authorList>
            <person name="Kan L."/>
            <person name="Grozhik A.V."/>
            <person name="Vedanayagam J."/>
            <person name="Patil D.P."/>
            <person name="Pang N."/>
            <person name="Lim K.S."/>
            <person name="Huang Y.C."/>
            <person name="Joseph B."/>
            <person name="Lin C.J."/>
            <person name="Despic V."/>
            <person name="Guo J."/>
            <person name="Yan D."/>
            <person name="Kondo S."/>
            <person name="Deng W.M."/>
            <person name="Dedon P.C."/>
            <person name="Jaffrey S.R."/>
            <person name="Lai E.C."/>
        </authorList>
    </citation>
    <scope>SUBCELLULAR LOCATION</scope>
    <scope>IDENTIFICATION IN THE WMM COMPLEX</scope>
</reference>
<reference key="10">
    <citation type="journal article" date="2018" name="Genes Dev.">
        <title>Zc3h13/Flacc is required for adenosine methylation by bridging the mRNA-binding factor Rbm15/Spenito to the m6A machinery component Wtap/Fl(2)d.</title>
        <authorList>
            <person name="Knuckles P."/>
            <person name="Lence T."/>
            <person name="Haussmann I.U."/>
            <person name="Jacob D."/>
            <person name="Kreim N."/>
            <person name="Carl S.H."/>
            <person name="Masiello I."/>
            <person name="Hares T."/>
            <person name="Villasenor R."/>
            <person name="Hess D."/>
            <person name="Andrade-Navarro M.A."/>
            <person name="Biggiogera M."/>
            <person name="Helm M."/>
            <person name="Soller M."/>
            <person name="Buehler M."/>
            <person name="Roignant J.Y."/>
        </authorList>
    </citation>
    <scope>IDENTIFICATION IN THE WMM COMPLEX</scope>
</reference>
<reference key="11">
    <citation type="journal article" date="2018" name="Proc. Natl. Acad. Sci. U.S.A.">
        <title>Xio is a component of the Drosophila sex determination pathway and RNA N6-methyladenosine-methyladenosine methyltransferase complex.</title>
        <authorList>
            <person name="Guo J."/>
            <person name="Tang H.W."/>
            <person name="Li J."/>
            <person name="Perrimon N."/>
            <person name="Yan D."/>
        </authorList>
    </citation>
    <scope>IDENTIFICATION IN THE WMM COMPLEX</scope>
</reference>
<dbReference type="EMBL" id="AJ243599">
    <property type="protein sequence ID" value="CAB46637.1"/>
    <property type="molecule type" value="mRNA"/>
</dbReference>
<dbReference type="EMBL" id="AJ243607">
    <property type="protein sequence ID" value="CAB46726.1"/>
    <property type="molecule type" value="mRNA"/>
</dbReference>
<dbReference type="EMBL" id="AE013599">
    <property type="protein sequence ID" value="AAF58334.1"/>
    <property type="molecule type" value="Genomic_DNA"/>
</dbReference>
<dbReference type="EMBL" id="AE013599">
    <property type="protein sequence ID" value="AAM71007.1"/>
    <property type="molecule type" value="Genomic_DNA"/>
</dbReference>
<dbReference type="EMBL" id="AY069478">
    <property type="protein sequence ID" value="AAL39623.1"/>
    <property type="molecule type" value="mRNA"/>
</dbReference>
<dbReference type="RefSeq" id="NP_001246305.1">
    <molecule id="Q9Y091-2"/>
    <property type="nucleotide sequence ID" value="NM_001259376.2"/>
</dbReference>
<dbReference type="RefSeq" id="NP_001246306.1">
    <molecule id="Q9Y091-2"/>
    <property type="nucleotide sequence ID" value="NM_001259377.2"/>
</dbReference>
<dbReference type="RefSeq" id="NP_523732.2">
    <molecule id="Q9Y091-1"/>
    <property type="nucleotide sequence ID" value="NM_079008.4"/>
</dbReference>
<dbReference type="RefSeq" id="NP_725327.1">
    <molecule id="Q9Y091-2"/>
    <property type="nucleotide sequence ID" value="NM_166010.3"/>
</dbReference>
<dbReference type="SMR" id="Q9Y091"/>
<dbReference type="BioGRID" id="62282">
    <property type="interactions" value="41"/>
</dbReference>
<dbReference type="ComplexPortal" id="CPX-2344">
    <property type="entry name" value="N6-methyladenosine methyltransferase complex"/>
</dbReference>
<dbReference type="FunCoup" id="Q9Y091">
    <property type="interactions" value="1554"/>
</dbReference>
<dbReference type="IntAct" id="Q9Y091">
    <property type="interactions" value="81"/>
</dbReference>
<dbReference type="STRING" id="7227.FBpp0086773"/>
<dbReference type="GlyGen" id="Q9Y091">
    <property type="glycosylation" value="3 sites"/>
</dbReference>
<dbReference type="PaxDb" id="7227-FBpp0086773"/>
<dbReference type="DNASU" id="36527"/>
<dbReference type="EnsemblMetazoa" id="FBtr0087647">
    <molecule id="Q9Y091-1"/>
    <property type="protein sequence ID" value="FBpp0086773"/>
    <property type="gene ID" value="FBgn0000662"/>
</dbReference>
<dbReference type="EnsemblMetazoa" id="FBtr0087648">
    <molecule id="Q9Y091-2"/>
    <property type="protein sequence ID" value="FBpp0086774"/>
    <property type="gene ID" value="FBgn0000662"/>
</dbReference>
<dbReference type="EnsemblMetazoa" id="FBtr0304696">
    <molecule id="Q9Y091-2"/>
    <property type="protein sequence ID" value="FBpp0293239"/>
    <property type="gene ID" value="FBgn0000662"/>
</dbReference>
<dbReference type="EnsemblMetazoa" id="FBtr0304697">
    <molecule id="Q9Y091-2"/>
    <property type="protein sequence ID" value="FBpp0293240"/>
    <property type="gene ID" value="FBgn0000662"/>
</dbReference>
<dbReference type="GeneID" id="36527"/>
<dbReference type="KEGG" id="dme:Dmel_CG6315"/>
<dbReference type="AGR" id="FB:FBgn0000662"/>
<dbReference type="CTD" id="36527"/>
<dbReference type="FlyBase" id="FBgn0000662">
    <property type="gene designation" value="fl(2)d"/>
</dbReference>
<dbReference type="VEuPathDB" id="VectorBase:FBgn0000662"/>
<dbReference type="eggNOG" id="KOG2991">
    <property type="taxonomic scope" value="Eukaryota"/>
</dbReference>
<dbReference type="GeneTree" id="ENSGT00390000013931"/>
<dbReference type="HOGENOM" id="CLU_038094_0_0_1"/>
<dbReference type="InParanoid" id="Q9Y091"/>
<dbReference type="OMA" id="MPPTKYE"/>
<dbReference type="OrthoDB" id="3366661at2759"/>
<dbReference type="PhylomeDB" id="Q9Y091"/>
<dbReference type="Reactome" id="R-DME-72203">
    <property type="pathway name" value="Processing of Capped Intron-Containing Pre-mRNA"/>
</dbReference>
<dbReference type="BioGRID-ORCS" id="36527">
    <property type="hits" value="0 hits in 1 CRISPR screen"/>
</dbReference>
<dbReference type="GenomeRNAi" id="36527"/>
<dbReference type="PRO" id="PR:Q9Y091"/>
<dbReference type="Proteomes" id="UP000000803">
    <property type="component" value="Chromosome 2R"/>
</dbReference>
<dbReference type="Bgee" id="FBgn0000662">
    <property type="expression patterns" value="Expressed in male accessory gland secondary cell (Drosophila) in male reproductive gland and 272 other cell types or tissues"/>
</dbReference>
<dbReference type="ExpressionAtlas" id="Q9Y091">
    <property type="expression patterns" value="baseline and differential"/>
</dbReference>
<dbReference type="GO" id="GO:0005634">
    <property type="term" value="C:nucleus"/>
    <property type="evidence" value="ECO:0000314"/>
    <property type="project" value="FlyBase"/>
</dbReference>
<dbReference type="GO" id="GO:0036396">
    <property type="term" value="C:RNA N6-methyladenosine methyltransferase complex"/>
    <property type="evidence" value="ECO:0000314"/>
    <property type="project" value="UniProtKB"/>
</dbReference>
<dbReference type="GO" id="GO:0030154">
    <property type="term" value="P:cell differentiation"/>
    <property type="evidence" value="ECO:0007669"/>
    <property type="project" value="UniProtKB-KW"/>
</dbReference>
<dbReference type="GO" id="GO:0048749">
    <property type="term" value="P:compound eye development"/>
    <property type="evidence" value="ECO:0000315"/>
    <property type="project" value="FlyBase"/>
</dbReference>
<dbReference type="GO" id="GO:0019099">
    <property type="term" value="P:female germ-line sex determination"/>
    <property type="evidence" value="ECO:0000303"/>
    <property type="project" value="FlyBase"/>
</dbReference>
<dbReference type="GO" id="GO:0016556">
    <property type="term" value="P:mRNA modification"/>
    <property type="evidence" value="ECO:0007669"/>
    <property type="project" value="InterPro"/>
</dbReference>
<dbReference type="GO" id="GO:0006397">
    <property type="term" value="P:mRNA processing"/>
    <property type="evidence" value="ECO:0000315"/>
    <property type="project" value="FlyBase"/>
</dbReference>
<dbReference type="GO" id="GO:0007539">
    <property type="term" value="P:primary sex determination, soma"/>
    <property type="evidence" value="ECO:0000303"/>
    <property type="project" value="FlyBase"/>
</dbReference>
<dbReference type="GO" id="GO:0000381">
    <property type="term" value="P:regulation of alternative mRNA splicing, via spliceosome"/>
    <property type="evidence" value="ECO:0000315"/>
    <property type="project" value="FlyBase"/>
</dbReference>
<dbReference type="GO" id="GO:0000375">
    <property type="term" value="P:RNA splicing, via transesterification reactions"/>
    <property type="evidence" value="ECO:0000315"/>
    <property type="project" value="UniProtKB"/>
</dbReference>
<dbReference type="GO" id="GO:0007530">
    <property type="term" value="P:sex determination"/>
    <property type="evidence" value="ECO:0000353"/>
    <property type="project" value="FlyBase"/>
</dbReference>
<dbReference type="GO" id="GO:0007548">
    <property type="term" value="P:sex differentiation"/>
    <property type="evidence" value="ECO:0007669"/>
    <property type="project" value="UniProtKB-KW"/>
</dbReference>
<dbReference type="InterPro" id="IPR033757">
    <property type="entry name" value="WTAP"/>
</dbReference>
<dbReference type="PANTHER" id="PTHR15217:SF0">
    <property type="entry name" value="PRE-MRNA-SPLICING REGULATOR WTAP"/>
    <property type="match status" value="1"/>
</dbReference>
<dbReference type="PANTHER" id="PTHR15217">
    <property type="entry name" value="WILMS' TUMOR 1-ASSOCIATING PROTEIN"/>
    <property type="match status" value="1"/>
</dbReference>
<dbReference type="Pfam" id="PF17098">
    <property type="entry name" value="Wtap"/>
    <property type="match status" value="1"/>
</dbReference>
<dbReference type="SUPFAM" id="SSF81995">
    <property type="entry name" value="beta-sandwich domain of Sec23/24"/>
    <property type="match status" value="1"/>
</dbReference>
<protein>
    <recommendedName>
        <fullName evidence="11">Pre-mRNA-splicing regulator female-lethal(2)D</fullName>
    </recommendedName>
    <alternativeName>
        <fullName evidence="11">dFL(2)D</fullName>
    </alternativeName>
</protein>
<sequence>MSVAAMTMDDQRPCMNSYDKMPPTKYEQNLNILNSSQNSGATGGPASPTPSGLEDHHHHHHPHPHHHHHQEQQQQQQQQQHLQQQQQQQQQQHAAAVAEAVAAAEQRQRLLEDEIENLKLEQVRMAQQCADAQRREKILMRRLANKEQEFQDYVSQIAEYKAQQAPTALALRTALLDPAVNLLFERLKKELKATKAKLEETQNELSAWKFTPDSNTGKRLMAKCRLLYQENEELGKMTSNGRLAKLETELAMQKSFSEEVKKSQSELDDFLQELDEDVEGMQSTILFLQQELKTTRDRIQTLEKENAQLKQAIKDEVVAPAAATNGGTNTTINKLETIHEDACMANNPTNPDCYNGNTNNEQIAAVPQIPLSDDGSNMNGNAARLARKRNYQEEEALPTVVVVPTPTPVGNNVQEAPPIREVTAPRTLPPKKSKLRGITTRRNSQLEEDHQPVTTPVAVPMIVDNAVAGMASEEAAAAAAAVNNSNTGIIPETGVQVGVPVEGGDPGAPAAPGRILTRRRSVRMQQNGSGAVDYST</sequence>
<accession>Q9Y091</accession>
<accession>A1Z9H6</accession>
<accession>Q7K100</accession>
<accession>Q7KA73</accession>
<accession>Q9U974</accession>
<feature type="chain" id="PRO_0000308630" description="Pre-mRNA-splicing regulator female-lethal(2)D">
    <location>
        <begin position="1"/>
        <end position="536"/>
    </location>
</feature>
<feature type="region of interest" description="Disordered" evidence="2">
    <location>
        <begin position="1"/>
        <end position="91"/>
    </location>
</feature>
<feature type="region of interest" description="Disordered" evidence="2">
    <location>
        <begin position="424"/>
        <end position="450"/>
    </location>
</feature>
<feature type="coiled-coil region" evidence="1">
    <location>
        <begin position="254"/>
        <end position="319"/>
    </location>
</feature>
<feature type="compositionally biased region" description="Low complexity" evidence="2">
    <location>
        <begin position="28"/>
        <end position="39"/>
    </location>
</feature>
<feature type="compositionally biased region" description="Basic residues" evidence="2">
    <location>
        <begin position="57"/>
        <end position="69"/>
    </location>
</feature>
<feature type="compositionally biased region" description="Low complexity" evidence="2">
    <location>
        <begin position="72"/>
        <end position="91"/>
    </location>
</feature>
<feature type="splice variant" id="VSP_029041" description="In isoform B." evidence="11">
    <location>
        <begin position="1"/>
        <end position="124"/>
    </location>
</feature>
<feature type="sequence conflict" description="In Ref. 1; CAB46637." evidence="12" ref="1">
    <original>E</original>
    <variation>EQ</variation>
    <location>
        <position position="71"/>
    </location>
</feature>
<feature type="sequence conflict" description="In Ref. 1; CAB46637." evidence="12" ref="1">
    <original>L</original>
    <variation>LQQ</variation>
    <location>
        <position position="82"/>
    </location>
</feature>
<feature type="sequence conflict" description="In Ref. 1; CAB46637/CAB46726." evidence="12" ref="1">
    <original>V</original>
    <variation>A</variation>
    <location>
        <position position="366"/>
    </location>
</feature>
<feature type="sequence conflict" description="In Ref. 1; CAB46637/CAB46726." evidence="12" ref="1">
    <original>L</original>
    <variation>P</variation>
    <location>
        <position position="371"/>
    </location>
</feature>
<gene>
    <name evidence="11 14" type="primary">fl(2)d</name>
    <name evidence="14" type="ORF">CG6315</name>
</gene>
<evidence type="ECO:0000255" key="1"/>
<evidence type="ECO:0000256" key="2">
    <source>
        <dbReference type="SAM" id="MobiDB-lite"/>
    </source>
</evidence>
<evidence type="ECO:0000269" key="3">
    <source>
    </source>
</evidence>
<evidence type="ECO:0000269" key="4">
    <source>
    </source>
</evidence>
<evidence type="ECO:0000269" key="5">
    <source>
    </source>
</evidence>
<evidence type="ECO:0000269" key="6">
    <source>
    </source>
</evidence>
<evidence type="ECO:0000269" key="7">
    <source>
    </source>
</evidence>
<evidence type="ECO:0000269" key="8">
    <source>
    </source>
</evidence>
<evidence type="ECO:0000269" key="9">
    <source>
    </source>
</evidence>
<evidence type="ECO:0000269" key="10">
    <source>
    </source>
</evidence>
<evidence type="ECO:0000303" key="11">
    <source>
    </source>
</evidence>
<evidence type="ECO:0000305" key="12"/>
<evidence type="ECO:0000305" key="13">
    <source>
    </source>
</evidence>
<evidence type="ECO:0000312" key="14">
    <source>
        <dbReference type="FlyBase" id="FBgn0000662"/>
    </source>
</evidence>
<organism>
    <name type="scientific">Drosophila melanogaster</name>
    <name type="common">Fruit fly</name>
    <dbReference type="NCBI Taxonomy" id="7227"/>
    <lineage>
        <taxon>Eukaryota</taxon>
        <taxon>Metazoa</taxon>
        <taxon>Ecdysozoa</taxon>
        <taxon>Arthropoda</taxon>
        <taxon>Hexapoda</taxon>
        <taxon>Insecta</taxon>
        <taxon>Pterygota</taxon>
        <taxon>Neoptera</taxon>
        <taxon>Endopterygota</taxon>
        <taxon>Diptera</taxon>
        <taxon>Brachycera</taxon>
        <taxon>Muscomorpha</taxon>
        <taxon>Ephydroidea</taxon>
        <taxon>Drosophilidae</taxon>
        <taxon>Drosophila</taxon>
        <taxon>Sophophora</taxon>
    </lineage>
</organism>
<comment type="function">
    <text evidence="3 6 13">Associated component of the WMM complex, a complex that mediates N6-methyladenosine (m6A) methylation of mRNAs, a modification that plays a role in the efficiency of mRNA splicing and is required for sex determination (PubMed:27919077). Required for sex determination and dosage compensation via Sxl alternative splicing: m6A methylation acts as a key regulator of Sxl pre-mRNA and promotes female-specific alternative splicing of Sxl, which determines female physiognomy (PubMed:1695150, PubMed:27919077). M6A methylation is also required for neuronal functions (PubMed:27919077). Required for proper inclusion of regulated exons in Ubx transcripts, leading to isoforms Ia/b and IIa/b (PubMed:10101174).</text>
</comment>
<comment type="subunit">
    <text evidence="5 7 8 9 10">Component of the WMM complex, a N6-methyltransferase complex composed of a catalytic subcomplex, named MAC, and of an associated subcomplex, named MACOM (PubMed:27919077, PubMed:28675155, PubMed:29535189, PubMed:29555755). The MAC subcomplex is composed of Ime4/Mettl3 and Mettl14 (PubMed:29535189, PubMed:29555755). The MACOM subcomplex is composed of fl(2)d, Flacc/Xio, Hakai, vir, and, in some cases of nito (PubMed:27919077, PubMed:28675155, PubMed:29535189, PubMed:29555755). Interacts with vir and msk (PubMed:12444081). Part of a complex containing fl(2)d, Sxl and vir (PubMed:12444081).</text>
</comment>
<comment type="interaction">
    <interactant intactId="EBI-101869">
        <id>Q9Y091</id>
    </interactant>
    <interactant intactId="EBI-2509071">
        <id>Q9VWN4</id>
        <label>Flacc</label>
    </interactant>
    <organismsDiffer>false</organismsDiffer>
    <experiments>4</experiments>
</comment>
<comment type="subcellular location">
    <subcellularLocation>
        <location evidence="4 7 8">Nucleus</location>
    </subcellularLocation>
</comment>
<comment type="alternative products">
    <event type="alternative splicing"/>
    <isoform>
        <id>Q9Y091-1</id>
        <name>A</name>
        <sequence type="displayed"/>
    </isoform>
    <isoform>
        <id>Q9Y091-2</id>
        <name>B</name>
        <name>s</name>
        <sequence type="described" ref="VSP_029041"/>
    </isoform>
</comment>
<comment type="developmental stage">
    <text evidence="7">Ubiquitously expressed in early embryonic stages with enrichment in the neuroectoderm at later stages.</text>
</comment>
<comment type="miscellaneous">
    <molecule>Isoform A</molecule>
    <text>Major.</text>
</comment>
<comment type="miscellaneous">
    <molecule>Isoform B</molecule>
    <text evidence="12">Minor.</text>
</comment>
<comment type="similarity">
    <text evidence="12">Belongs to the fl(2)d family.</text>
</comment>
<proteinExistence type="evidence at protein level"/>